<reference key="1">
    <citation type="journal article" date="2006" name="Proc. Natl. Acad. Sci. U.S.A.">
        <title>Identification of genes subject to positive selection in uropathogenic strains of Escherichia coli: a comparative genomics approach.</title>
        <authorList>
            <person name="Chen S.L."/>
            <person name="Hung C.-S."/>
            <person name="Xu J."/>
            <person name="Reigstad C.S."/>
            <person name="Magrini V."/>
            <person name="Sabo A."/>
            <person name="Blasiar D."/>
            <person name="Bieri T."/>
            <person name="Meyer R.R."/>
            <person name="Ozersky P."/>
            <person name="Armstrong J.R."/>
            <person name="Fulton R.S."/>
            <person name="Latreille J.P."/>
            <person name="Spieth J."/>
            <person name="Hooton T.M."/>
            <person name="Mardis E.R."/>
            <person name="Hultgren S.J."/>
            <person name="Gordon J.I."/>
        </authorList>
    </citation>
    <scope>NUCLEOTIDE SEQUENCE [LARGE SCALE GENOMIC DNA]</scope>
    <source>
        <strain>UTI89 / UPEC</strain>
    </source>
</reference>
<feature type="chain" id="PRO_1000008059" description="DNA mismatch repair protein MutS">
    <location>
        <begin position="1"/>
        <end position="853"/>
    </location>
</feature>
<feature type="binding site" evidence="1">
    <location>
        <begin position="614"/>
        <end position="621"/>
    </location>
    <ligand>
        <name>ATP</name>
        <dbReference type="ChEBI" id="CHEBI:30616"/>
    </ligand>
</feature>
<keyword id="KW-0067">ATP-binding</keyword>
<keyword id="KW-0227">DNA damage</keyword>
<keyword id="KW-0234">DNA repair</keyword>
<keyword id="KW-0238">DNA-binding</keyword>
<keyword id="KW-0547">Nucleotide-binding</keyword>
<sequence>MSTIENFDAHTPMMQQYLKLKAQHPEILLFYRMGDFYELFYDDAKRASQLLDISLTKRGASAGEPIPMAGIPYHAVENYLAKLVNQGESVAICEQIGDPATSKGPVERKVVRIVTPGTISDEALLQERQDNLLAAIWQDSKGFGYATLDISSGRFRLSEPADRETMAAELQRTNPAELLYAEDFAEMSLIEGRRGLRRRPLWEFEIDTARQQLNLQFGTRDLVGFGVENAPRGLCAAGCLLQYAKDTQRTTLPHIRSITMERQQDSIIMDAATRRNLEITQNLAGGAENTLASVLDCTVTPMGSRMLKRWLHMPVRDTRVLLERQQTIGALQDFTAELQPVLRQVGDLERILARLALRTARPRDLARMRHAFQQLPELRAQLENVDSAPVQALREKMGEFAELRDLLERAIIDTPPVLVRDGGVIATGYNEELDEWRALADGATDYLERLEVRERERTGLDTLKVGFNAVHGYYIQISRGQSHLAPINYMRRQTLKNAERYIIPELKEYEDKVLTSKGKALALEKQLYEELFDLLLPHLEALQQSASALAELDVLVNLAERAYTLNYTCPTFIDKPGIRITEGRHPVVEQVLNEPFIANPLNLSPQRRMLIITGPNMGGKSTYMRQTALIALMAYIGSYVPAQKVEIGPIDRIFTRVGAADDLASGRSTFMVEMTETANILHNATEYSLVLMDEIGRGTSTYDGLSLAWACAENLANKIKALTLFATHYFELTQLPEKMEGVANVHLDALEHGDTIAFMHSVQDGAASKSYGLAVAALAGVPKEVIKRARQKLRELESISPNAAATQVDGTQMSLLSVPEETSPAVEALENLDPDSLTPRQALEWIYRLKSLV</sequence>
<organism>
    <name type="scientific">Escherichia coli (strain UTI89 / UPEC)</name>
    <dbReference type="NCBI Taxonomy" id="364106"/>
    <lineage>
        <taxon>Bacteria</taxon>
        <taxon>Pseudomonadati</taxon>
        <taxon>Pseudomonadota</taxon>
        <taxon>Gammaproteobacteria</taxon>
        <taxon>Enterobacterales</taxon>
        <taxon>Enterobacteriaceae</taxon>
        <taxon>Escherichia</taxon>
    </lineage>
</organism>
<accession>Q1R7W4</accession>
<name>MUTS_ECOUT</name>
<evidence type="ECO:0000255" key="1">
    <source>
        <dbReference type="HAMAP-Rule" id="MF_00096"/>
    </source>
</evidence>
<comment type="function">
    <text evidence="1">This protein is involved in the repair of mismatches in DNA. It is possible that it carries out the mismatch recognition step. This protein has a weak ATPase activity.</text>
</comment>
<comment type="similarity">
    <text evidence="1">Belongs to the DNA mismatch repair MutS family.</text>
</comment>
<proteinExistence type="inferred from homology"/>
<gene>
    <name evidence="1" type="primary">mutS</name>
    <name type="ordered locus">UTI89_C3098</name>
</gene>
<protein>
    <recommendedName>
        <fullName evidence="1">DNA mismatch repair protein MutS</fullName>
    </recommendedName>
</protein>
<dbReference type="EMBL" id="CP000243">
    <property type="protein sequence ID" value="ABE08550.1"/>
    <property type="molecule type" value="Genomic_DNA"/>
</dbReference>
<dbReference type="RefSeq" id="WP_000103864.1">
    <property type="nucleotide sequence ID" value="NZ_CP064825.1"/>
</dbReference>
<dbReference type="SMR" id="Q1R7W4"/>
<dbReference type="KEGG" id="eci:UTI89_C3098"/>
<dbReference type="HOGENOM" id="CLU_002472_4_0_6"/>
<dbReference type="Proteomes" id="UP000001952">
    <property type="component" value="Chromosome"/>
</dbReference>
<dbReference type="GO" id="GO:0005829">
    <property type="term" value="C:cytosol"/>
    <property type="evidence" value="ECO:0007669"/>
    <property type="project" value="TreeGrafter"/>
</dbReference>
<dbReference type="GO" id="GO:0005524">
    <property type="term" value="F:ATP binding"/>
    <property type="evidence" value="ECO:0007669"/>
    <property type="project" value="UniProtKB-UniRule"/>
</dbReference>
<dbReference type="GO" id="GO:0140664">
    <property type="term" value="F:ATP-dependent DNA damage sensor activity"/>
    <property type="evidence" value="ECO:0007669"/>
    <property type="project" value="InterPro"/>
</dbReference>
<dbReference type="GO" id="GO:0003684">
    <property type="term" value="F:damaged DNA binding"/>
    <property type="evidence" value="ECO:0007669"/>
    <property type="project" value="UniProtKB-UniRule"/>
</dbReference>
<dbReference type="GO" id="GO:0030983">
    <property type="term" value="F:mismatched DNA binding"/>
    <property type="evidence" value="ECO:0007669"/>
    <property type="project" value="InterPro"/>
</dbReference>
<dbReference type="GO" id="GO:0006298">
    <property type="term" value="P:mismatch repair"/>
    <property type="evidence" value="ECO:0007669"/>
    <property type="project" value="UniProtKB-UniRule"/>
</dbReference>
<dbReference type="CDD" id="cd03284">
    <property type="entry name" value="ABC_MutS1"/>
    <property type="match status" value="1"/>
</dbReference>
<dbReference type="FunFam" id="1.10.1420.10:FF:000002">
    <property type="entry name" value="DNA mismatch repair protein MutS"/>
    <property type="match status" value="1"/>
</dbReference>
<dbReference type="FunFam" id="3.30.420.110:FF:000001">
    <property type="entry name" value="DNA mismatch repair protein MutS"/>
    <property type="match status" value="1"/>
</dbReference>
<dbReference type="FunFam" id="3.40.1170.10:FF:000001">
    <property type="entry name" value="DNA mismatch repair protein MutS"/>
    <property type="match status" value="1"/>
</dbReference>
<dbReference type="FunFam" id="3.40.50.300:FF:000283">
    <property type="entry name" value="DNA mismatch repair protein MutS"/>
    <property type="match status" value="1"/>
</dbReference>
<dbReference type="Gene3D" id="1.10.1420.10">
    <property type="match status" value="2"/>
</dbReference>
<dbReference type="Gene3D" id="6.10.140.430">
    <property type="match status" value="1"/>
</dbReference>
<dbReference type="Gene3D" id="3.40.1170.10">
    <property type="entry name" value="DNA repair protein MutS, domain I"/>
    <property type="match status" value="1"/>
</dbReference>
<dbReference type="Gene3D" id="3.30.420.110">
    <property type="entry name" value="MutS, connector domain"/>
    <property type="match status" value="1"/>
</dbReference>
<dbReference type="Gene3D" id="3.40.50.300">
    <property type="entry name" value="P-loop containing nucleotide triphosphate hydrolases"/>
    <property type="match status" value="1"/>
</dbReference>
<dbReference type="HAMAP" id="MF_00096">
    <property type="entry name" value="MutS"/>
    <property type="match status" value="1"/>
</dbReference>
<dbReference type="InterPro" id="IPR005748">
    <property type="entry name" value="DNA_mismatch_repair_MutS"/>
</dbReference>
<dbReference type="InterPro" id="IPR007695">
    <property type="entry name" value="DNA_mismatch_repair_MutS-lik_N"/>
</dbReference>
<dbReference type="InterPro" id="IPR017261">
    <property type="entry name" value="DNA_mismatch_repair_MutS/MSH"/>
</dbReference>
<dbReference type="InterPro" id="IPR000432">
    <property type="entry name" value="DNA_mismatch_repair_MutS_C"/>
</dbReference>
<dbReference type="InterPro" id="IPR007861">
    <property type="entry name" value="DNA_mismatch_repair_MutS_clamp"/>
</dbReference>
<dbReference type="InterPro" id="IPR007696">
    <property type="entry name" value="DNA_mismatch_repair_MutS_core"/>
</dbReference>
<dbReference type="InterPro" id="IPR016151">
    <property type="entry name" value="DNA_mismatch_repair_MutS_N"/>
</dbReference>
<dbReference type="InterPro" id="IPR036187">
    <property type="entry name" value="DNA_mismatch_repair_MutS_sf"/>
</dbReference>
<dbReference type="InterPro" id="IPR007860">
    <property type="entry name" value="DNA_mmatch_repair_MutS_con_dom"/>
</dbReference>
<dbReference type="InterPro" id="IPR045076">
    <property type="entry name" value="MutS"/>
</dbReference>
<dbReference type="InterPro" id="IPR036678">
    <property type="entry name" value="MutS_con_dom_sf"/>
</dbReference>
<dbReference type="InterPro" id="IPR027417">
    <property type="entry name" value="P-loop_NTPase"/>
</dbReference>
<dbReference type="NCBIfam" id="TIGR01070">
    <property type="entry name" value="mutS1"/>
    <property type="match status" value="1"/>
</dbReference>
<dbReference type="NCBIfam" id="NF003810">
    <property type="entry name" value="PRK05399.1"/>
    <property type="match status" value="1"/>
</dbReference>
<dbReference type="PANTHER" id="PTHR11361:SF34">
    <property type="entry name" value="DNA MISMATCH REPAIR PROTEIN MSH1, MITOCHONDRIAL"/>
    <property type="match status" value="1"/>
</dbReference>
<dbReference type="PANTHER" id="PTHR11361">
    <property type="entry name" value="DNA MISMATCH REPAIR PROTEIN MUTS FAMILY MEMBER"/>
    <property type="match status" value="1"/>
</dbReference>
<dbReference type="Pfam" id="PF01624">
    <property type="entry name" value="MutS_I"/>
    <property type="match status" value="1"/>
</dbReference>
<dbReference type="Pfam" id="PF05188">
    <property type="entry name" value="MutS_II"/>
    <property type="match status" value="1"/>
</dbReference>
<dbReference type="Pfam" id="PF05192">
    <property type="entry name" value="MutS_III"/>
    <property type="match status" value="1"/>
</dbReference>
<dbReference type="Pfam" id="PF05190">
    <property type="entry name" value="MutS_IV"/>
    <property type="match status" value="1"/>
</dbReference>
<dbReference type="Pfam" id="PF00488">
    <property type="entry name" value="MutS_V"/>
    <property type="match status" value="1"/>
</dbReference>
<dbReference type="PIRSF" id="PIRSF037677">
    <property type="entry name" value="DNA_mis_repair_Msh6"/>
    <property type="match status" value="1"/>
</dbReference>
<dbReference type="SMART" id="SM00534">
    <property type="entry name" value="MUTSac"/>
    <property type="match status" value="1"/>
</dbReference>
<dbReference type="SMART" id="SM00533">
    <property type="entry name" value="MUTSd"/>
    <property type="match status" value="1"/>
</dbReference>
<dbReference type="SUPFAM" id="SSF55271">
    <property type="entry name" value="DNA repair protein MutS, domain I"/>
    <property type="match status" value="1"/>
</dbReference>
<dbReference type="SUPFAM" id="SSF53150">
    <property type="entry name" value="DNA repair protein MutS, domain II"/>
    <property type="match status" value="1"/>
</dbReference>
<dbReference type="SUPFAM" id="SSF48334">
    <property type="entry name" value="DNA repair protein MutS, domain III"/>
    <property type="match status" value="1"/>
</dbReference>
<dbReference type="SUPFAM" id="SSF52540">
    <property type="entry name" value="P-loop containing nucleoside triphosphate hydrolases"/>
    <property type="match status" value="1"/>
</dbReference>
<dbReference type="PROSITE" id="PS00486">
    <property type="entry name" value="DNA_MISMATCH_REPAIR_2"/>
    <property type="match status" value="1"/>
</dbReference>